<evidence type="ECO:0000255" key="1">
    <source>
        <dbReference type="PROSITE-ProRule" id="PRU10007"/>
    </source>
</evidence>
<evidence type="ECO:0000255" key="2">
    <source>
        <dbReference type="PROSITE-ProRule" id="PRU10008"/>
    </source>
</evidence>
<evidence type="ECO:0000269" key="3">
    <source>
    </source>
</evidence>
<evidence type="ECO:0000269" key="4">
    <source>
    </source>
</evidence>
<evidence type="ECO:0000303" key="5">
    <source>
    </source>
</evidence>
<evidence type="ECO:0000305" key="6"/>
<evidence type="ECO:0000305" key="7">
    <source>
    </source>
</evidence>
<feature type="chain" id="PRO_0000056565" description="Aldehyde dehydrogenase B">
    <location>
        <begin position="1"/>
        <end position="512"/>
    </location>
</feature>
<feature type="active site" evidence="1">
    <location>
        <position position="268"/>
    </location>
</feature>
<feature type="active site" evidence="2">
    <location>
        <position position="307"/>
    </location>
</feature>
<feature type="mutagenesis site" description="Less than 10% of wild-type acetaldehyde dehydrogenase activity." evidence="3">
    <original>R</original>
    <variation>E</variation>
    <location>
        <position position="197"/>
    </location>
</feature>
<name>ALDB_ECOLI</name>
<dbReference type="EC" id="1.2.1.4" evidence="3"/>
<dbReference type="EMBL" id="L40742">
    <property type="protein sequence ID" value="AAC36939.1"/>
    <property type="molecule type" value="Genomic_DNA"/>
</dbReference>
<dbReference type="EMBL" id="U00039">
    <property type="protein sequence ID" value="AAB18565.1"/>
    <property type="status" value="ALT_INIT"/>
    <property type="molecule type" value="Genomic_DNA"/>
</dbReference>
<dbReference type="EMBL" id="U00096">
    <property type="protein sequence ID" value="AAC76612.2"/>
    <property type="molecule type" value="Genomic_DNA"/>
</dbReference>
<dbReference type="EMBL" id="AP009048">
    <property type="protein sequence ID" value="BAE77705.1"/>
    <property type="molecule type" value="Genomic_DNA"/>
</dbReference>
<dbReference type="PIR" id="S47809">
    <property type="entry name" value="S47809"/>
</dbReference>
<dbReference type="RefSeq" id="NP_418045.4">
    <property type="nucleotide sequence ID" value="NC_000913.3"/>
</dbReference>
<dbReference type="RefSeq" id="WP_000183980.1">
    <property type="nucleotide sequence ID" value="NZ_SSZK01000041.1"/>
</dbReference>
<dbReference type="SMR" id="P37685"/>
<dbReference type="BioGRID" id="4262555">
    <property type="interactions" value="20"/>
</dbReference>
<dbReference type="DIP" id="DIP-9082N"/>
<dbReference type="FunCoup" id="P37685">
    <property type="interactions" value="361"/>
</dbReference>
<dbReference type="IntAct" id="P37685">
    <property type="interactions" value="3"/>
</dbReference>
<dbReference type="MINT" id="P37685"/>
<dbReference type="STRING" id="511145.b3588"/>
<dbReference type="jPOST" id="P37685"/>
<dbReference type="PaxDb" id="511145-b3588"/>
<dbReference type="EnsemblBacteria" id="AAC76612">
    <property type="protein sequence ID" value="AAC76612"/>
    <property type="gene ID" value="b3588"/>
</dbReference>
<dbReference type="GeneID" id="948104"/>
<dbReference type="KEGG" id="ecj:JW3561"/>
<dbReference type="KEGG" id="eco:b3588"/>
<dbReference type="KEGG" id="ecoc:C3026_19455"/>
<dbReference type="PATRIC" id="fig|1411691.4.peg.3123"/>
<dbReference type="EchoBASE" id="EB2200"/>
<dbReference type="eggNOG" id="COG1012">
    <property type="taxonomic scope" value="Bacteria"/>
</dbReference>
<dbReference type="HOGENOM" id="CLU_005391_0_2_6"/>
<dbReference type="InParanoid" id="P37685"/>
<dbReference type="OMA" id="GQLIMQY"/>
<dbReference type="OrthoDB" id="9812625at2"/>
<dbReference type="PhylomeDB" id="P37685"/>
<dbReference type="BioCyc" id="EcoCyc:ALDDEHYDROGB-MONOMER"/>
<dbReference type="BioCyc" id="MetaCyc:ALDDEHYDROGB-MONOMER"/>
<dbReference type="SABIO-RK" id="P37685"/>
<dbReference type="PRO" id="PR:P37685"/>
<dbReference type="Proteomes" id="UP000000625">
    <property type="component" value="Chromosome"/>
</dbReference>
<dbReference type="GO" id="GO:0140088">
    <property type="term" value="F:acetaldehyde dehydrogenase (NADP+) activity"/>
    <property type="evidence" value="ECO:0007669"/>
    <property type="project" value="RHEA"/>
</dbReference>
<dbReference type="GO" id="GO:0004029">
    <property type="term" value="F:aldehyde dehydrogenase (NAD+) activity"/>
    <property type="evidence" value="ECO:0000314"/>
    <property type="project" value="EcoliWiki"/>
</dbReference>
<dbReference type="GO" id="GO:0016491">
    <property type="term" value="F:oxidoreductase activity"/>
    <property type="evidence" value="ECO:0000314"/>
    <property type="project" value="EcoliWiki"/>
</dbReference>
<dbReference type="GO" id="GO:0006974">
    <property type="term" value="P:DNA damage response"/>
    <property type="evidence" value="ECO:0000270"/>
    <property type="project" value="EcoliWiki"/>
</dbReference>
<dbReference type="GO" id="GO:0045471">
    <property type="term" value="P:response to ethanol"/>
    <property type="evidence" value="ECO:0000314"/>
    <property type="project" value="EcoliWiki"/>
</dbReference>
<dbReference type="CDD" id="cd07559">
    <property type="entry name" value="ALDH_ACDHII_AcoD-like"/>
    <property type="match status" value="1"/>
</dbReference>
<dbReference type="FunFam" id="3.40.605.10:FF:000001">
    <property type="entry name" value="Aldehyde dehydrogenase 1"/>
    <property type="match status" value="1"/>
</dbReference>
<dbReference type="FunFam" id="3.40.309.10:FF:000017">
    <property type="entry name" value="Aldehyde dehydrogenase B"/>
    <property type="match status" value="1"/>
</dbReference>
<dbReference type="Gene3D" id="3.40.605.10">
    <property type="entry name" value="Aldehyde Dehydrogenase, Chain A, domain 1"/>
    <property type="match status" value="1"/>
</dbReference>
<dbReference type="Gene3D" id="3.40.309.10">
    <property type="entry name" value="Aldehyde Dehydrogenase, Chain A, domain 2"/>
    <property type="match status" value="1"/>
</dbReference>
<dbReference type="InterPro" id="IPR016161">
    <property type="entry name" value="Ald_DH/histidinol_DH"/>
</dbReference>
<dbReference type="InterPro" id="IPR016163">
    <property type="entry name" value="Ald_DH_C"/>
</dbReference>
<dbReference type="InterPro" id="IPR016160">
    <property type="entry name" value="Ald_DH_CS_CYS"/>
</dbReference>
<dbReference type="InterPro" id="IPR029510">
    <property type="entry name" value="Ald_DH_CS_GLU"/>
</dbReference>
<dbReference type="InterPro" id="IPR016162">
    <property type="entry name" value="Ald_DH_N"/>
</dbReference>
<dbReference type="InterPro" id="IPR015590">
    <property type="entry name" value="Aldehyde_DH_dom"/>
</dbReference>
<dbReference type="PANTHER" id="PTHR43111">
    <property type="entry name" value="ALDEHYDE DEHYDROGENASE B-RELATED"/>
    <property type="match status" value="1"/>
</dbReference>
<dbReference type="PANTHER" id="PTHR43111:SF1">
    <property type="entry name" value="ALDEHYDE DEHYDROGENASE B-RELATED"/>
    <property type="match status" value="1"/>
</dbReference>
<dbReference type="Pfam" id="PF00171">
    <property type="entry name" value="Aldedh"/>
    <property type="match status" value="1"/>
</dbReference>
<dbReference type="SUPFAM" id="SSF53720">
    <property type="entry name" value="ALDH-like"/>
    <property type="match status" value="1"/>
</dbReference>
<dbReference type="PROSITE" id="PS00070">
    <property type="entry name" value="ALDEHYDE_DEHYDR_CYS"/>
    <property type="match status" value="1"/>
</dbReference>
<dbReference type="PROSITE" id="PS00687">
    <property type="entry name" value="ALDEHYDE_DEHYDR_GLU"/>
    <property type="match status" value="1"/>
</dbReference>
<organism>
    <name type="scientific">Escherichia coli (strain K12)</name>
    <dbReference type="NCBI Taxonomy" id="83333"/>
    <lineage>
        <taxon>Bacteria</taxon>
        <taxon>Pseudomonadati</taxon>
        <taxon>Pseudomonadota</taxon>
        <taxon>Gammaproteobacteria</taxon>
        <taxon>Enterobacterales</taxon>
        <taxon>Enterobacteriaceae</taxon>
        <taxon>Escherichia</taxon>
    </lineage>
</organism>
<protein>
    <recommendedName>
        <fullName evidence="5">Aldehyde dehydrogenase B</fullName>
        <ecNumber evidence="3">1.2.1.4</ecNumber>
    </recommendedName>
    <alternativeName>
        <fullName evidence="5">Acetaldehyde dehydrogenase</fullName>
    </alternativeName>
</protein>
<proteinExistence type="evidence at protein level"/>
<reference key="1">
    <citation type="journal article" date="1995" name="J. Bacteriol.">
        <title>aldB, an RpoS-dependent gene in Escherichia coli encoding an aldehyde dehydrogenase that is repressed by Fis and activated by Crp.</title>
        <authorList>
            <person name="Xu J."/>
            <person name="Johnson R.C."/>
        </authorList>
    </citation>
    <scope>NUCLEOTIDE SEQUENCE [GENOMIC DNA]</scope>
    <scope>FUNCTION</scope>
    <scope>TRANSCRIPTION REGULATION</scope>
    <source>
        <strain>K12 / MG1655 / ATCC 47076</strain>
    </source>
</reference>
<reference key="2">
    <citation type="journal article" date="1994" name="Nucleic Acids Res.">
        <title>Analysis of the Escherichia coli genome. V. DNA sequence of the region from 76.0 to 81.5 minutes.</title>
        <authorList>
            <person name="Sofia H.J."/>
            <person name="Burland V."/>
            <person name="Daniels D.L."/>
            <person name="Plunkett G. III"/>
            <person name="Blattner F.R."/>
        </authorList>
    </citation>
    <scope>NUCLEOTIDE SEQUENCE [LARGE SCALE GENOMIC DNA]</scope>
    <source>
        <strain>K12 / MG1655 / ATCC 47076</strain>
    </source>
</reference>
<reference key="3">
    <citation type="journal article" date="1997" name="Science">
        <title>The complete genome sequence of Escherichia coli K-12.</title>
        <authorList>
            <person name="Blattner F.R."/>
            <person name="Plunkett G. III"/>
            <person name="Bloch C.A."/>
            <person name="Perna N.T."/>
            <person name="Burland V."/>
            <person name="Riley M."/>
            <person name="Collado-Vides J."/>
            <person name="Glasner J.D."/>
            <person name="Rode C.K."/>
            <person name="Mayhew G.F."/>
            <person name="Gregor J."/>
            <person name="Davis N.W."/>
            <person name="Kirkpatrick H.A."/>
            <person name="Goeden M.A."/>
            <person name="Rose D.J."/>
            <person name="Mau B."/>
            <person name="Shao Y."/>
        </authorList>
    </citation>
    <scope>NUCLEOTIDE SEQUENCE [LARGE SCALE GENOMIC DNA]</scope>
    <source>
        <strain>K12 / MG1655 / ATCC 47076</strain>
    </source>
</reference>
<reference key="4">
    <citation type="journal article" date="2006" name="Mol. Syst. Biol.">
        <title>Highly accurate genome sequences of Escherichia coli K-12 strains MG1655 and W3110.</title>
        <authorList>
            <person name="Hayashi K."/>
            <person name="Morooka N."/>
            <person name="Yamamoto Y."/>
            <person name="Fujita K."/>
            <person name="Isono K."/>
            <person name="Choi S."/>
            <person name="Ohtsubo E."/>
            <person name="Baba T."/>
            <person name="Wanner B.L."/>
            <person name="Mori H."/>
            <person name="Horiuchi T."/>
        </authorList>
    </citation>
    <scope>NUCLEOTIDE SEQUENCE [LARGE SCALE GENOMIC DNA]</scope>
    <source>
        <strain>K12 / W3110 / ATCC 27325 / DSM 5911</strain>
    </source>
</reference>
<reference key="5">
    <citation type="journal article" date="2005" name="J. Bacteriol.">
        <title>Isolation and characterization of an aldehyde dehydrogenase encoded by the aldB gene of Escherichia coli.</title>
        <authorList>
            <person name="Ho K.K."/>
            <person name="Weiner H."/>
        </authorList>
    </citation>
    <scope>PROTEIN SEQUENCE OF 1-10</scope>
    <scope>FUNCTION</scope>
    <scope>CATALYTIC ACTIVITY</scope>
    <scope>SUBSTRATE SPECIFICITY</scope>
    <scope>BIOPHYSICOCHEMICAL PROPERTIES</scope>
    <scope>ACTIVITY REGULATION</scope>
    <scope>MASS SPECTROMETRY</scope>
    <scope>MUTAGENESIS OF ARG-197</scope>
    <scope>SUBUNIT</scope>
    <source>
        <strain>K12 / DH5-alpha</strain>
    </source>
</reference>
<comment type="function">
    <text evidence="3 7">Catalyzes the NADP(+)-dependent oxidation of diverse aldehydes to their corresponding carboxylic acids, with a preference for acetaldehyde and chloroacetaldehyde (PubMed:15659684). May play a role in detoxifying aldehydes present during stationary phase (Probable). Cannot use NAD(+) instead of NADP(+) as the electron acceptor. To a lesser extent is also able to oxidize propionaldehyde (propanal), benzaldehyde, mafosfamide, and 4-hydroperoxycyclophosphamide. Does not use either glyceraldehyde or glycolaldehyde as substrates (PubMed:15659684).</text>
</comment>
<comment type="catalytic activity">
    <reaction evidence="3">
        <text>an aldehyde + NADP(+) + H2O = a carboxylate + NADPH + 2 H(+)</text>
        <dbReference type="Rhea" id="RHEA:11888"/>
        <dbReference type="ChEBI" id="CHEBI:15377"/>
        <dbReference type="ChEBI" id="CHEBI:15378"/>
        <dbReference type="ChEBI" id="CHEBI:17478"/>
        <dbReference type="ChEBI" id="CHEBI:29067"/>
        <dbReference type="ChEBI" id="CHEBI:57783"/>
        <dbReference type="ChEBI" id="CHEBI:58349"/>
        <dbReference type="EC" id="1.2.1.4"/>
    </reaction>
</comment>
<comment type="catalytic activity">
    <reaction evidence="3">
        <text>acetaldehyde + NADP(+) + H2O = acetate + NADPH + 2 H(+)</text>
        <dbReference type="Rhea" id="RHEA:25298"/>
        <dbReference type="ChEBI" id="CHEBI:15343"/>
        <dbReference type="ChEBI" id="CHEBI:15377"/>
        <dbReference type="ChEBI" id="CHEBI:15378"/>
        <dbReference type="ChEBI" id="CHEBI:30089"/>
        <dbReference type="ChEBI" id="CHEBI:57783"/>
        <dbReference type="ChEBI" id="CHEBI:58349"/>
        <dbReference type="EC" id="1.2.1.4"/>
    </reaction>
</comment>
<comment type="catalytic activity">
    <reaction evidence="3">
        <text>chloroacetaldehyde + NADP(+) + H2O = chloroacetate + NADPH + 2 H(+)</text>
        <dbReference type="Rhea" id="RHEA:62248"/>
        <dbReference type="ChEBI" id="CHEBI:15377"/>
        <dbReference type="ChEBI" id="CHEBI:15378"/>
        <dbReference type="ChEBI" id="CHEBI:23123"/>
        <dbReference type="ChEBI" id="CHEBI:27871"/>
        <dbReference type="ChEBI" id="CHEBI:57783"/>
        <dbReference type="ChEBI" id="CHEBI:58349"/>
    </reaction>
</comment>
<comment type="catalytic activity">
    <reaction evidence="3">
        <text>propanal + NADP(+) + H2O = propanoate + NADPH + 2 H(+)</text>
        <dbReference type="Rhea" id="RHEA:27918"/>
        <dbReference type="ChEBI" id="CHEBI:15377"/>
        <dbReference type="ChEBI" id="CHEBI:15378"/>
        <dbReference type="ChEBI" id="CHEBI:17153"/>
        <dbReference type="ChEBI" id="CHEBI:17272"/>
        <dbReference type="ChEBI" id="CHEBI:57783"/>
        <dbReference type="ChEBI" id="CHEBI:58349"/>
    </reaction>
</comment>
<comment type="activity regulation">
    <text evidence="3">Magnesium increases enzyme activity with various substrates.</text>
</comment>
<comment type="biophysicochemical properties">
    <kinetics>
        <KM evidence="3">2.5 uM for acetaldehyde</KM>
        <KM evidence="3">3.6 uM for chloroacetaldehyde</KM>
        <KM evidence="3">5.8 uM for propionaldehyde</KM>
        <KM evidence="3">56.8 uM for benzaldehyde</KM>
        <KM evidence="3">900 uM for 4-hydroperoxycyclophosphamide</KM>
        <KM evidence="3">65 uM for NADP</KM>
        <Vmax evidence="3">2.0 umol/min/mg enzyme with acetaldehyde as substrate</Vmax>
        <Vmax evidence="3">3.3 umol/min/mg enzyme with chloroacetaldehyde as substrate</Vmax>
        <Vmax evidence="3">1.0 umol/min/mg enzyme with propionaldehyde as substrate</Vmax>
        <Vmax evidence="3">0.6 umol/min/mg enzyme with benzaldehyde as substrate</Vmax>
        <Vmax evidence="3">0.2 umol/min/mg enzyme with 4-hydroperoxycyclophosphamide</Vmax>
    </kinetics>
</comment>
<comment type="subunit">
    <text evidence="3">Homotetramer.</text>
</comment>
<comment type="induction">
    <text evidence="4">Is repressed by Fis. Positively regulated by RpoS and Crp. Induced by ethanol. Expression is maximally induced during the transition from exponential phase to stationary phase.</text>
</comment>
<comment type="mass spectrometry" mass="56352.0" method="MALDI" evidence="3"/>
<comment type="similarity">
    <text evidence="6">Belongs to the aldehyde dehydrogenase family.</text>
</comment>
<comment type="sequence caution" evidence="6">
    <conflict type="erroneous initiation">
        <sequence resource="EMBL-CDS" id="AAB18565"/>
    </conflict>
    <text>Extended N-terminus.</text>
</comment>
<accession>P37685</accession>
<accession>P78118</accession>
<accession>Q2M7Q1</accession>
<sequence length="512" mass="56306">MTNNPPSAQIKPGEYGFPLKLKARYDNFIGGEWVAPADGEYYQNLTPVTGQLLCEVASSGKRDIDLALDAAHKVKDKWAHTSVQDRAAILFKIADRMEQNLELLATAETWDNGKPIRETSAADVPLAIDHFRYFASCIRAQEGGISEVDSETVAYHFHEPLGVVGQIIPWNFPLLMASWKMAPALAAGNCVVLKPARLTPLSVLLLMEIVGDLLPPGVVNVVNGAGGVIGEYLATSKRIAKVAFTGSTEVGQQIMQYATQNIIPVTLELGGKSPNIFFADVMDEEDAFFDKALEGFALFAFNQGEVCTCPSRALVQESIYERFMERAIRRVESIRSGNPLDSVTQMGAQVSHGQLETILNYIDIGKKEGADVLTGGRRKLLEGELKDGYYLEPTILFGQNNMRVFQEEIFGPVLAVTTFKTMEEALELANDTQYGLGAGVWSRNGNLAYKMGRGIQAGRVWTNCYHAYPAHAAFGGYKQSGIGRETHKMMLEHYQQTKCLLVSYSDKPLGLF</sequence>
<gene>
    <name evidence="5" type="primary">aldB</name>
    <name type="synonym">yiaX</name>
    <name type="ordered locus">b3588</name>
    <name type="ordered locus">JW3561</name>
</gene>
<keyword id="KW-0903">Direct protein sequencing</keyword>
<keyword id="KW-0460">Magnesium</keyword>
<keyword id="KW-0521">NADP</keyword>
<keyword id="KW-0560">Oxidoreductase</keyword>
<keyword id="KW-1185">Reference proteome</keyword>